<reference key="1">
    <citation type="journal article" date="2008" name="Biochimie">
        <title>A novel family of antimicrobial peptides from the skin of Amolops loloensis.</title>
        <authorList>
            <person name="Wang A."/>
            <person name="Wang J."/>
            <person name="Hong J."/>
            <person name="Feng H."/>
            <person name="Yang H."/>
            <person name="Yu X."/>
            <person name="Ma Y."/>
            <person name="Lai R."/>
        </authorList>
    </citation>
    <scope>NUCLEOTIDE SEQUENCE [MRNA]</scope>
    <scope>PROTEIN SEQUENCE OF 45-62</scope>
    <scope>FUNCTION</scope>
    <scope>SYNTHESIS OF 45-62</scope>
    <scope>MASS SPECTROMETRY</scope>
    <scope>SUBCELLULAR LOCATION</scope>
    <source>
        <tissue>Skin</tissue>
        <tissue>Skin secretion</tissue>
    </source>
</reference>
<name>AMO1_AMOLO</name>
<accession>C5H0C7</accession>
<comment type="function">
    <text evidence="2">Antimicrobial peptide with activity against Gram-positive bacteria (PubMed:18312859). Has been tested against S.aureus (MIC=37.5 ug/mL), against B.pumilus (MIC=75.0 ug/mL), B.cereus (no activity detected) (PubMed:18312859). Does not show activity against Gram-negative bacteria (E.coli, B.dysenteriae, A.calcoaceticus, P.aeruginosa) and fungi (C.albicans) (PubMed:18312859). Does not show hemolytic activity against rabbit erythrocytes (PubMed:18312859).</text>
</comment>
<comment type="subcellular location">
    <subcellularLocation>
        <location evidence="2">Secreted</location>
    </subcellularLocation>
</comment>
<comment type="tissue specificity">
    <text evidence="5">Expressed by the skin glands.</text>
</comment>
<comment type="mass spectrometry"/>
<comment type="similarity">
    <text evidence="4">Belongs to the frog skin active peptide (FSAP) family. Amolopin subfamily.</text>
</comment>
<feature type="signal peptide" evidence="1">
    <location>
        <begin position="1"/>
        <end position="22"/>
    </location>
</feature>
<feature type="propeptide" id="PRO_0000450012" evidence="5">
    <location>
        <begin position="23"/>
        <end position="44"/>
    </location>
</feature>
<feature type="peptide" id="PRO_5002952490" description="Amolopin-P1" evidence="2">
    <location>
        <begin position="45"/>
        <end position="62"/>
    </location>
</feature>
<dbReference type="EMBL" id="EU311540">
    <property type="protein sequence ID" value="ACA09630.1"/>
    <property type="molecule type" value="mRNA"/>
</dbReference>
<dbReference type="GO" id="GO:0005576">
    <property type="term" value="C:extracellular region"/>
    <property type="evidence" value="ECO:0007669"/>
    <property type="project" value="UniProtKB-SubCell"/>
</dbReference>
<dbReference type="GO" id="GO:0042742">
    <property type="term" value="P:defense response to bacterium"/>
    <property type="evidence" value="ECO:0007669"/>
    <property type="project" value="UniProtKB-KW"/>
</dbReference>
<dbReference type="GO" id="GO:0045087">
    <property type="term" value="P:innate immune response"/>
    <property type="evidence" value="ECO:0007669"/>
    <property type="project" value="UniProtKB-KW"/>
</dbReference>
<dbReference type="InterPro" id="IPR004275">
    <property type="entry name" value="Frog_antimicrobial_propeptide"/>
</dbReference>
<dbReference type="Pfam" id="PF03032">
    <property type="entry name" value="FSAP_sig_propep"/>
    <property type="match status" value="1"/>
</dbReference>
<sequence>MFPMKKSLLLLFFFGPISLSFCDQERGADEEENGGEVTEQEVKRNILSSIVNGINRALSFFG</sequence>
<protein>
    <recommendedName>
        <fullName evidence="3 6">Amolopin-P1</fullName>
    </recommendedName>
</protein>
<keyword id="KW-0878">Amphibian defense peptide</keyword>
<keyword id="KW-0044">Antibiotic</keyword>
<keyword id="KW-0929">Antimicrobial</keyword>
<keyword id="KW-0165">Cleavage on pair of basic residues</keyword>
<keyword id="KW-0903">Direct protein sequencing</keyword>
<keyword id="KW-0391">Immunity</keyword>
<keyword id="KW-0399">Innate immunity</keyword>
<keyword id="KW-0964">Secreted</keyword>
<keyword id="KW-0732">Signal</keyword>
<organism>
    <name type="scientific">Amolops loloensis</name>
    <name type="common">Lolokou Sucker Frog</name>
    <name type="synonym">Staurois loloensis</name>
    <dbReference type="NCBI Taxonomy" id="318551"/>
    <lineage>
        <taxon>Eukaryota</taxon>
        <taxon>Metazoa</taxon>
        <taxon>Chordata</taxon>
        <taxon>Craniata</taxon>
        <taxon>Vertebrata</taxon>
        <taxon>Euteleostomi</taxon>
        <taxon>Amphibia</taxon>
        <taxon>Batrachia</taxon>
        <taxon>Anura</taxon>
        <taxon>Neobatrachia</taxon>
        <taxon>Ranoidea</taxon>
        <taxon>Ranidae</taxon>
        <taxon>Amolops</taxon>
    </lineage>
</organism>
<proteinExistence type="evidence at protein level"/>
<evidence type="ECO:0000255" key="1"/>
<evidence type="ECO:0000269" key="2">
    <source>
    </source>
</evidence>
<evidence type="ECO:0000303" key="3">
    <source>
    </source>
</evidence>
<evidence type="ECO:0000305" key="4"/>
<evidence type="ECO:0000305" key="5">
    <source>
    </source>
</evidence>
<evidence type="ECO:0000312" key="6">
    <source>
        <dbReference type="EMBL" id="ACA09630.1"/>
    </source>
</evidence>